<keyword id="KW-0285">Flavoprotein</keyword>
<keyword id="KW-0288">FMN</keyword>
<keyword id="KW-0560">Oxidoreductase</keyword>
<keyword id="KW-0664">Pyridoxine biosynthesis</keyword>
<keyword id="KW-1185">Reference proteome</keyword>
<sequence>MSENTDSTHEKLIFAPSRYQYEKSSLHRDALMGKDPLVLFNQWFQEATDDEGIKSPESTTLSTARLPSGRVSSRLVLLKELDHRGFIIFTNLGTSKKAKDLKSNPYASLSFWWEPLQRQVRVEGIIERLSREETEEYFKTRPRNSRIGAWASPQSEVIADREELEKRVEEYKKKFGEDESVPVPVPDFWGGIRIVPLEIEFWQGGKYRLHDRFSFRRNTLDEDYELVRLAP</sequence>
<protein>
    <recommendedName>
        <fullName>Probable pyridoxamine 5'-phosphate oxidase</fullName>
        <ecNumber>1.4.3.5</ecNumber>
    </recommendedName>
    <alternativeName>
        <fullName>PNP/PMP oxidase</fullName>
        <shortName>PNPOx</shortName>
    </alternativeName>
</protein>
<organism>
    <name type="scientific">Schizosaccharomyces pombe (strain 972 / ATCC 24843)</name>
    <name type="common">Fission yeast</name>
    <dbReference type="NCBI Taxonomy" id="284812"/>
    <lineage>
        <taxon>Eukaryota</taxon>
        <taxon>Fungi</taxon>
        <taxon>Dikarya</taxon>
        <taxon>Ascomycota</taxon>
        <taxon>Taphrinomycotina</taxon>
        <taxon>Schizosaccharomycetes</taxon>
        <taxon>Schizosaccharomycetales</taxon>
        <taxon>Schizosaccharomycetaceae</taxon>
        <taxon>Schizosaccharomyces</taxon>
    </lineage>
</organism>
<dbReference type="EC" id="1.4.3.5"/>
<dbReference type="EMBL" id="CU329670">
    <property type="protein sequence ID" value="CAB60247.1"/>
    <property type="molecule type" value="Genomic_DNA"/>
</dbReference>
<dbReference type="PIR" id="T50066">
    <property type="entry name" value="T50066"/>
</dbReference>
<dbReference type="SMR" id="Q9UTQ1"/>
<dbReference type="FunCoup" id="Q9UTQ1">
    <property type="interactions" value="174"/>
</dbReference>
<dbReference type="STRING" id="284812.Q9UTQ1"/>
<dbReference type="iPTMnet" id="Q9UTQ1"/>
<dbReference type="PaxDb" id="4896-SPAC1093.02.1"/>
<dbReference type="EnsemblFungi" id="SPAC1093.02.1">
    <property type="protein sequence ID" value="SPAC1093.02.1:pep"/>
    <property type="gene ID" value="SPAC1093.02"/>
</dbReference>
<dbReference type="KEGG" id="spo:2542998"/>
<dbReference type="PomBase" id="SPAC1093.02"/>
<dbReference type="VEuPathDB" id="FungiDB:SPAC1093.02"/>
<dbReference type="eggNOG" id="KOG2586">
    <property type="taxonomic scope" value="Eukaryota"/>
</dbReference>
<dbReference type="HOGENOM" id="CLU_032263_2_0_1"/>
<dbReference type="InParanoid" id="Q9UTQ1"/>
<dbReference type="OMA" id="AYFRTRP"/>
<dbReference type="PhylomeDB" id="Q9UTQ1"/>
<dbReference type="Reactome" id="R-SPO-964975">
    <property type="pathway name" value="Vitamin B6 activation to pyridoxal phosphate"/>
</dbReference>
<dbReference type="UniPathway" id="UPA01068">
    <property type="reaction ID" value="UER00304"/>
</dbReference>
<dbReference type="UniPathway" id="UPA01068">
    <property type="reaction ID" value="UER00305"/>
</dbReference>
<dbReference type="PRO" id="PR:Q9UTQ1"/>
<dbReference type="Proteomes" id="UP000002485">
    <property type="component" value="Chromosome I"/>
</dbReference>
<dbReference type="GO" id="GO:0010181">
    <property type="term" value="F:FMN binding"/>
    <property type="evidence" value="ECO:0007669"/>
    <property type="project" value="InterPro"/>
</dbReference>
<dbReference type="GO" id="GO:0004733">
    <property type="term" value="F:pyridoxamine phosphate oxidase activity"/>
    <property type="evidence" value="ECO:0000318"/>
    <property type="project" value="GO_Central"/>
</dbReference>
<dbReference type="GO" id="GO:0042818">
    <property type="term" value="P:pyridoxamine metabolic process"/>
    <property type="evidence" value="ECO:0000305"/>
    <property type="project" value="PomBase"/>
</dbReference>
<dbReference type="GO" id="GO:0008615">
    <property type="term" value="P:pyridoxine biosynthetic process"/>
    <property type="evidence" value="ECO:0007669"/>
    <property type="project" value="UniProtKB-KW"/>
</dbReference>
<dbReference type="FunFam" id="2.30.110.10:FF:000010">
    <property type="entry name" value="Pyridoxine phosphate oxidase"/>
    <property type="match status" value="1"/>
</dbReference>
<dbReference type="Gene3D" id="2.30.110.10">
    <property type="entry name" value="Electron Transport, Fmn-binding Protein, Chain A"/>
    <property type="match status" value="1"/>
</dbReference>
<dbReference type="HAMAP" id="MF_01629">
    <property type="entry name" value="PdxH"/>
    <property type="match status" value="1"/>
</dbReference>
<dbReference type="InterPro" id="IPR000659">
    <property type="entry name" value="Pyridox_Oxase"/>
</dbReference>
<dbReference type="InterPro" id="IPR019740">
    <property type="entry name" value="Pyridox_Oxase_CS"/>
</dbReference>
<dbReference type="InterPro" id="IPR011576">
    <property type="entry name" value="Pyridox_Oxase_N"/>
</dbReference>
<dbReference type="InterPro" id="IPR019576">
    <property type="entry name" value="Pyridoxamine_oxidase_dimer_C"/>
</dbReference>
<dbReference type="InterPro" id="IPR012349">
    <property type="entry name" value="Split_barrel_FMN-bd"/>
</dbReference>
<dbReference type="NCBIfam" id="TIGR00558">
    <property type="entry name" value="pdxH"/>
    <property type="match status" value="1"/>
</dbReference>
<dbReference type="NCBIfam" id="NF004231">
    <property type="entry name" value="PRK05679.1"/>
    <property type="match status" value="1"/>
</dbReference>
<dbReference type="PANTHER" id="PTHR10851:SF0">
    <property type="entry name" value="PYRIDOXINE-5'-PHOSPHATE OXIDASE"/>
    <property type="match status" value="1"/>
</dbReference>
<dbReference type="PANTHER" id="PTHR10851">
    <property type="entry name" value="PYRIDOXINE-5-PHOSPHATE OXIDASE"/>
    <property type="match status" value="1"/>
</dbReference>
<dbReference type="Pfam" id="PF10590">
    <property type="entry name" value="PNP_phzG_C"/>
    <property type="match status" value="1"/>
</dbReference>
<dbReference type="Pfam" id="PF01243">
    <property type="entry name" value="PNPOx_N"/>
    <property type="match status" value="1"/>
</dbReference>
<dbReference type="PIRSF" id="PIRSF000190">
    <property type="entry name" value="Pyd_amn-ph_oxd"/>
    <property type="match status" value="1"/>
</dbReference>
<dbReference type="SUPFAM" id="SSF50475">
    <property type="entry name" value="FMN-binding split barrel"/>
    <property type="match status" value="1"/>
</dbReference>
<dbReference type="PROSITE" id="PS01064">
    <property type="entry name" value="PYRIDOX_OXIDASE"/>
    <property type="match status" value="1"/>
</dbReference>
<gene>
    <name type="ORF">SPAC1093.02</name>
</gene>
<reference key="1">
    <citation type="journal article" date="2002" name="Nature">
        <title>The genome sequence of Schizosaccharomyces pombe.</title>
        <authorList>
            <person name="Wood V."/>
            <person name="Gwilliam R."/>
            <person name="Rajandream M.A."/>
            <person name="Lyne M.H."/>
            <person name="Lyne R."/>
            <person name="Stewart A."/>
            <person name="Sgouros J.G."/>
            <person name="Peat N."/>
            <person name="Hayles J."/>
            <person name="Baker S.G."/>
            <person name="Basham D."/>
            <person name="Bowman S."/>
            <person name="Brooks K."/>
            <person name="Brown D."/>
            <person name="Brown S."/>
            <person name="Chillingworth T."/>
            <person name="Churcher C.M."/>
            <person name="Collins M."/>
            <person name="Connor R."/>
            <person name="Cronin A."/>
            <person name="Davis P."/>
            <person name="Feltwell T."/>
            <person name="Fraser A."/>
            <person name="Gentles S."/>
            <person name="Goble A."/>
            <person name="Hamlin N."/>
            <person name="Harris D.E."/>
            <person name="Hidalgo J."/>
            <person name="Hodgson G."/>
            <person name="Holroyd S."/>
            <person name="Hornsby T."/>
            <person name="Howarth S."/>
            <person name="Huckle E.J."/>
            <person name="Hunt S."/>
            <person name="Jagels K."/>
            <person name="James K.D."/>
            <person name="Jones L."/>
            <person name="Jones M."/>
            <person name="Leather S."/>
            <person name="McDonald S."/>
            <person name="McLean J."/>
            <person name="Mooney P."/>
            <person name="Moule S."/>
            <person name="Mungall K.L."/>
            <person name="Murphy L.D."/>
            <person name="Niblett D."/>
            <person name="Odell C."/>
            <person name="Oliver K."/>
            <person name="O'Neil S."/>
            <person name="Pearson D."/>
            <person name="Quail M.A."/>
            <person name="Rabbinowitsch E."/>
            <person name="Rutherford K.M."/>
            <person name="Rutter S."/>
            <person name="Saunders D."/>
            <person name="Seeger K."/>
            <person name="Sharp S."/>
            <person name="Skelton J."/>
            <person name="Simmonds M.N."/>
            <person name="Squares R."/>
            <person name="Squares S."/>
            <person name="Stevens K."/>
            <person name="Taylor K."/>
            <person name="Taylor R.G."/>
            <person name="Tivey A."/>
            <person name="Walsh S.V."/>
            <person name="Warren T."/>
            <person name="Whitehead S."/>
            <person name="Woodward J.R."/>
            <person name="Volckaert G."/>
            <person name="Aert R."/>
            <person name="Robben J."/>
            <person name="Grymonprez B."/>
            <person name="Weltjens I."/>
            <person name="Vanstreels E."/>
            <person name="Rieger M."/>
            <person name="Schaefer M."/>
            <person name="Mueller-Auer S."/>
            <person name="Gabel C."/>
            <person name="Fuchs M."/>
            <person name="Duesterhoeft A."/>
            <person name="Fritzc C."/>
            <person name="Holzer E."/>
            <person name="Moestl D."/>
            <person name="Hilbert H."/>
            <person name="Borzym K."/>
            <person name="Langer I."/>
            <person name="Beck A."/>
            <person name="Lehrach H."/>
            <person name="Reinhardt R."/>
            <person name="Pohl T.M."/>
            <person name="Eger P."/>
            <person name="Zimmermann W."/>
            <person name="Wedler H."/>
            <person name="Wambutt R."/>
            <person name="Purnelle B."/>
            <person name="Goffeau A."/>
            <person name="Cadieu E."/>
            <person name="Dreano S."/>
            <person name="Gloux S."/>
            <person name="Lelaure V."/>
            <person name="Mottier S."/>
            <person name="Galibert F."/>
            <person name="Aves S.J."/>
            <person name="Xiang Z."/>
            <person name="Hunt C."/>
            <person name="Moore K."/>
            <person name="Hurst S.M."/>
            <person name="Lucas M."/>
            <person name="Rochet M."/>
            <person name="Gaillardin C."/>
            <person name="Tallada V.A."/>
            <person name="Garzon A."/>
            <person name="Thode G."/>
            <person name="Daga R.R."/>
            <person name="Cruzado L."/>
            <person name="Jimenez J."/>
            <person name="Sanchez M."/>
            <person name="del Rey F."/>
            <person name="Benito J."/>
            <person name="Dominguez A."/>
            <person name="Revuelta J.L."/>
            <person name="Moreno S."/>
            <person name="Armstrong J."/>
            <person name="Forsburg S.L."/>
            <person name="Cerutti L."/>
            <person name="Lowe T."/>
            <person name="McCombie W.R."/>
            <person name="Paulsen I."/>
            <person name="Potashkin J."/>
            <person name="Shpakovski G.V."/>
            <person name="Ussery D."/>
            <person name="Barrell B.G."/>
            <person name="Nurse P."/>
        </authorList>
    </citation>
    <scope>NUCLEOTIDE SEQUENCE [LARGE SCALE GENOMIC DNA]</scope>
    <source>
        <strain>972 / ATCC 24843</strain>
    </source>
</reference>
<evidence type="ECO:0000250" key="1"/>
<evidence type="ECO:0000250" key="2">
    <source>
        <dbReference type="UniProtKB" id="P0AFI7"/>
    </source>
</evidence>
<evidence type="ECO:0000250" key="3">
    <source>
        <dbReference type="UniProtKB" id="Q9NVS9"/>
    </source>
</evidence>
<evidence type="ECO:0000305" key="4"/>
<accession>Q9UTQ1</accession>
<comment type="function">
    <text evidence="1">Catalyzes the oxidation of either pyridoxine 5'-phosphate (PNP) or pyridoxamine 5'-phosphate (PMP) into pyridoxal 5'-phosphate (PLP).</text>
</comment>
<comment type="catalytic activity">
    <reaction>
        <text>pyridoxamine 5'-phosphate + O2 + H2O = pyridoxal 5'-phosphate + H2O2 + NH4(+)</text>
        <dbReference type="Rhea" id="RHEA:15817"/>
        <dbReference type="ChEBI" id="CHEBI:15377"/>
        <dbReference type="ChEBI" id="CHEBI:15379"/>
        <dbReference type="ChEBI" id="CHEBI:16240"/>
        <dbReference type="ChEBI" id="CHEBI:28938"/>
        <dbReference type="ChEBI" id="CHEBI:58451"/>
        <dbReference type="ChEBI" id="CHEBI:597326"/>
        <dbReference type="EC" id="1.4.3.5"/>
    </reaction>
</comment>
<comment type="catalytic activity">
    <reaction>
        <text>pyridoxine 5'-phosphate + O2 = pyridoxal 5'-phosphate + H2O2</text>
        <dbReference type="Rhea" id="RHEA:15149"/>
        <dbReference type="ChEBI" id="CHEBI:15379"/>
        <dbReference type="ChEBI" id="CHEBI:16240"/>
        <dbReference type="ChEBI" id="CHEBI:58589"/>
        <dbReference type="ChEBI" id="CHEBI:597326"/>
        <dbReference type="EC" id="1.4.3.5"/>
    </reaction>
</comment>
<comment type="cofactor">
    <cofactor evidence="1">
        <name>FMN</name>
        <dbReference type="ChEBI" id="CHEBI:58210"/>
    </cofactor>
    <text evidence="1">Binds 1 FMN per subunit.</text>
</comment>
<comment type="pathway">
    <text>Cofactor metabolism; pyridoxal 5'-phosphate salvage; pyridoxal 5'-phosphate from pyridoxamine 5'-phosphate: step 1/1.</text>
</comment>
<comment type="pathway">
    <text>Cofactor metabolism; pyridoxal 5'-phosphate salvage; pyridoxal 5'-phosphate from pyridoxine 5'-phosphate: step 1/1.</text>
</comment>
<comment type="subunit">
    <text evidence="1">Homodimer.</text>
</comment>
<comment type="similarity">
    <text evidence="4">Belongs to the pyridoxamine 5'-phosphate oxidase family.</text>
</comment>
<name>PDX3_SCHPO</name>
<feature type="chain" id="PRO_0000167786" description="Probable pyridoxamine 5'-phosphate oxidase">
    <location>
        <begin position="1"/>
        <end position="231"/>
    </location>
</feature>
<feature type="binding site" evidence="2">
    <location>
        <begin position="20"/>
        <end position="23"/>
    </location>
    <ligand>
        <name>pyridoxal 5'-phosphate</name>
        <dbReference type="ChEBI" id="CHEBI:597326"/>
    </ligand>
</feature>
<feature type="binding site" evidence="3">
    <location>
        <begin position="74"/>
        <end position="77"/>
    </location>
    <ligand>
        <name>FMN</name>
        <dbReference type="ChEBI" id="CHEBI:58210"/>
    </ligand>
</feature>
<feature type="binding site" evidence="3">
    <location>
        <position position="79"/>
    </location>
    <ligand>
        <name>pyridoxal 5'-phosphate</name>
        <dbReference type="ChEBI" id="CHEBI:597326"/>
    </ligand>
</feature>
<feature type="binding site" evidence="3">
    <location>
        <begin position="89"/>
        <end position="90"/>
    </location>
    <ligand>
        <name>FMN</name>
        <dbReference type="ChEBI" id="CHEBI:58210"/>
    </ligand>
</feature>
<feature type="binding site" evidence="3">
    <location>
        <begin position="96"/>
        <end position="97"/>
    </location>
    <ligand>
        <name>FMN</name>
        <dbReference type="ChEBI" id="CHEBI:58210"/>
    </ligand>
</feature>
<feature type="binding site" evidence="2">
    <location>
        <position position="119"/>
    </location>
    <ligand>
        <name>FMN</name>
        <dbReference type="ChEBI" id="CHEBI:58210"/>
    </ligand>
</feature>
<feature type="binding site" evidence="3">
    <location>
        <position position="137"/>
    </location>
    <ligand>
        <name>pyridoxal 5'-phosphate</name>
        <dbReference type="ChEBI" id="CHEBI:597326"/>
    </ligand>
</feature>
<feature type="binding site" evidence="3">
    <location>
        <position position="141"/>
    </location>
    <ligand>
        <name>pyridoxal 5'-phosphate</name>
        <dbReference type="ChEBI" id="CHEBI:597326"/>
    </ligand>
</feature>
<feature type="binding site" evidence="3">
    <location>
        <position position="145"/>
    </location>
    <ligand>
        <name>pyridoxal 5'-phosphate</name>
        <dbReference type="ChEBI" id="CHEBI:597326"/>
    </ligand>
</feature>
<feature type="binding site" evidence="3">
    <location>
        <begin position="154"/>
        <end position="155"/>
    </location>
    <ligand>
        <name>FMN</name>
        <dbReference type="ChEBI" id="CHEBI:58210"/>
    </ligand>
</feature>
<feature type="binding site" evidence="2">
    <location>
        <position position="202"/>
    </location>
    <ligand>
        <name>FMN</name>
        <dbReference type="ChEBI" id="CHEBI:58210"/>
    </ligand>
</feature>
<feature type="binding site" evidence="2">
    <location>
        <begin position="208"/>
        <end position="210"/>
    </location>
    <ligand>
        <name>pyridoxal 5'-phosphate</name>
        <dbReference type="ChEBI" id="CHEBI:597326"/>
    </ligand>
</feature>
<feature type="binding site" evidence="2">
    <location>
        <position position="212"/>
    </location>
    <ligand>
        <name>FMN</name>
        <dbReference type="ChEBI" id="CHEBI:58210"/>
    </ligand>
</feature>
<proteinExistence type="inferred from homology"/>